<evidence type="ECO:0000255" key="1">
    <source>
        <dbReference type="HAMAP-Rule" id="MF_01416"/>
    </source>
</evidence>
<organism>
    <name type="scientific">Staphylococcus saprophyticus subsp. saprophyticus (strain ATCC 15305 / DSM 20229 / NCIMB 8711 / NCTC 7292 / S-41)</name>
    <dbReference type="NCBI Taxonomy" id="342451"/>
    <lineage>
        <taxon>Bacteria</taxon>
        <taxon>Bacillati</taxon>
        <taxon>Bacillota</taxon>
        <taxon>Bacilli</taxon>
        <taxon>Bacillales</taxon>
        <taxon>Staphylococcaceae</taxon>
        <taxon>Staphylococcus</taxon>
    </lineage>
</organism>
<reference key="1">
    <citation type="journal article" date="2005" name="Proc. Natl. Acad. Sci. U.S.A.">
        <title>Whole genome sequence of Staphylococcus saprophyticus reveals the pathogenesis of uncomplicated urinary tract infection.</title>
        <authorList>
            <person name="Kuroda M."/>
            <person name="Yamashita A."/>
            <person name="Hirakawa H."/>
            <person name="Kumano M."/>
            <person name="Morikawa K."/>
            <person name="Higashide M."/>
            <person name="Maruyama A."/>
            <person name="Inose Y."/>
            <person name="Matoba K."/>
            <person name="Toh H."/>
            <person name="Kuhara S."/>
            <person name="Hattori M."/>
            <person name="Ohta T."/>
        </authorList>
    </citation>
    <scope>NUCLEOTIDE SEQUENCE [LARGE SCALE GENOMIC DNA]</scope>
    <source>
        <strain>ATCC 15305 / DSM 20229 / NCIMB 8711 / NCTC 7292 / S-41</strain>
    </source>
</reference>
<comment type="function">
    <text evidence="1">F(1)F(0) ATP synthase produces ATP from ADP in the presence of a proton or sodium gradient. F-type ATPases consist of two structural domains, F(1) containing the extramembraneous catalytic core and F(0) containing the membrane proton channel, linked together by a central stalk and a peripheral stalk. During catalysis, ATP synthesis in the catalytic domain of F(1) is coupled via a rotary mechanism of the central stalk subunits to proton translocation.</text>
</comment>
<comment type="function">
    <text evidence="1">This protein is part of the stalk that links CF(0) to CF(1). It either transmits conformational changes from CF(0) to CF(1) or is implicated in proton conduction.</text>
</comment>
<comment type="subunit">
    <text evidence="1">F-type ATPases have 2 components, F(1) - the catalytic core - and F(0) - the membrane proton channel. F(1) has five subunits: alpha(3), beta(3), gamma(1), delta(1), epsilon(1). F(0) has three main subunits: a(1), b(2) and c(10-14). The alpha and beta chains form an alternating ring which encloses part of the gamma chain. F(1) is attached to F(0) by a central stalk formed by the gamma and epsilon chains, while a peripheral stalk is formed by the delta and b chains.</text>
</comment>
<comment type="subcellular location">
    <subcellularLocation>
        <location evidence="1">Cell membrane</location>
        <topology evidence="1">Peripheral membrane protein</topology>
    </subcellularLocation>
</comment>
<comment type="similarity">
    <text evidence="1">Belongs to the ATPase delta chain family.</text>
</comment>
<gene>
    <name evidence="1" type="primary">atpH</name>
    <name type="ordered locus">SSP0778</name>
</gene>
<dbReference type="EMBL" id="AP008934">
    <property type="protein sequence ID" value="BAE17923.1"/>
    <property type="molecule type" value="Genomic_DNA"/>
</dbReference>
<dbReference type="RefSeq" id="WP_011302680.1">
    <property type="nucleotide sequence ID" value="NZ_MTGA01000032.1"/>
</dbReference>
<dbReference type="SMR" id="Q49Z53"/>
<dbReference type="GeneID" id="3615745"/>
<dbReference type="KEGG" id="ssp:SSP0778"/>
<dbReference type="PATRIC" id="fig|342451.11.peg.780"/>
<dbReference type="eggNOG" id="COG0712">
    <property type="taxonomic scope" value="Bacteria"/>
</dbReference>
<dbReference type="HOGENOM" id="CLU_085114_4_1_9"/>
<dbReference type="OrthoDB" id="9802471at2"/>
<dbReference type="Proteomes" id="UP000006371">
    <property type="component" value="Chromosome"/>
</dbReference>
<dbReference type="GO" id="GO:0005886">
    <property type="term" value="C:plasma membrane"/>
    <property type="evidence" value="ECO:0007669"/>
    <property type="project" value="UniProtKB-SubCell"/>
</dbReference>
<dbReference type="GO" id="GO:0045259">
    <property type="term" value="C:proton-transporting ATP synthase complex"/>
    <property type="evidence" value="ECO:0007669"/>
    <property type="project" value="UniProtKB-KW"/>
</dbReference>
<dbReference type="GO" id="GO:0046933">
    <property type="term" value="F:proton-transporting ATP synthase activity, rotational mechanism"/>
    <property type="evidence" value="ECO:0007669"/>
    <property type="project" value="UniProtKB-UniRule"/>
</dbReference>
<dbReference type="Gene3D" id="1.10.520.20">
    <property type="entry name" value="N-terminal domain of the delta subunit of the F1F0-ATP synthase"/>
    <property type="match status" value="1"/>
</dbReference>
<dbReference type="HAMAP" id="MF_01416">
    <property type="entry name" value="ATP_synth_delta_bact"/>
    <property type="match status" value="1"/>
</dbReference>
<dbReference type="InterPro" id="IPR026015">
    <property type="entry name" value="ATP_synth_OSCP/delta_N_sf"/>
</dbReference>
<dbReference type="InterPro" id="IPR020781">
    <property type="entry name" value="ATPase_OSCP/d_CS"/>
</dbReference>
<dbReference type="InterPro" id="IPR000711">
    <property type="entry name" value="ATPase_OSCP/dsu"/>
</dbReference>
<dbReference type="NCBIfam" id="TIGR01145">
    <property type="entry name" value="ATP_synt_delta"/>
    <property type="match status" value="1"/>
</dbReference>
<dbReference type="NCBIfam" id="NF004399">
    <property type="entry name" value="PRK05758.1-1"/>
    <property type="match status" value="1"/>
</dbReference>
<dbReference type="PANTHER" id="PTHR11910">
    <property type="entry name" value="ATP SYNTHASE DELTA CHAIN"/>
    <property type="match status" value="1"/>
</dbReference>
<dbReference type="Pfam" id="PF00213">
    <property type="entry name" value="OSCP"/>
    <property type="match status" value="1"/>
</dbReference>
<dbReference type="PRINTS" id="PR00125">
    <property type="entry name" value="ATPASEDELTA"/>
</dbReference>
<dbReference type="SUPFAM" id="SSF47928">
    <property type="entry name" value="N-terminal domain of the delta subunit of the F1F0-ATP synthase"/>
    <property type="match status" value="1"/>
</dbReference>
<dbReference type="PROSITE" id="PS00389">
    <property type="entry name" value="ATPASE_DELTA"/>
    <property type="match status" value="1"/>
</dbReference>
<protein>
    <recommendedName>
        <fullName evidence="1">ATP synthase subunit delta</fullName>
    </recommendedName>
    <alternativeName>
        <fullName evidence="1">ATP synthase F(1) sector subunit delta</fullName>
    </alternativeName>
    <alternativeName>
        <fullName evidence="1">F-type ATPase subunit delta</fullName>
        <shortName evidence="1">F-ATPase subunit delta</shortName>
    </alternativeName>
</protein>
<keyword id="KW-0066">ATP synthesis</keyword>
<keyword id="KW-1003">Cell membrane</keyword>
<keyword id="KW-0139">CF(1)</keyword>
<keyword id="KW-0375">Hydrogen ion transport</keyword>
<keyword id="KW-0406">Ion transport</keyword>
<keyword id="KW-0472">Membrane</keyword>
<keyword id="KW-1185">Reference proteome</keyword>
<keyword id="KW-0813">Transport</keyword>
<proteinExistence type="inferred from homology"/>
<feature type="chain" id="PRO_0000371151" description="ATP synthase subunit delta">
    <location>
        <begin position="1"/>
        <end position="179"/>
    </location>
</feature>
<name>ATPD_STAS1</name>
<sequence length="179" mass="20595">MANIAKKYAKALFDTAKDADILDDMYDEFSTINEAVQSENKKLQALDADPQKDVEQRRRFVSIVFGQTNQYLQNMLTILASNRHLGHIHEIYIAFETLYNEEHNQDYAVIESVYQLSEEELSSIEEIIKARTKLSKIMITNKINPELIGGIRVKVGTKVMDASIKNDLAQLERQFIRVK</sequence>
<accession>Q49Z53</accession>